<evidence type="ECO:0000255" key="1">
    <source>
        <dbReference type="HAMAP-Rule" id="MF_00160"/>
    </source>
</evidence>
<proteinExistence type="inferred from homology"/>
<feature type="chain" id="PRO_1000097207" description="Phosphoserine aminotransferase">
    <location>
        <begin position="1"/>
        <end position="360"/>
    </location>
</feature>
<feature type="binding site" evidence="1">
    <location>
        <position position="41"/>
    </location>
    <ligand>
        <name>L-glutamate</name>
        <dbReference type="ChEBI" id="CHEBI:29985"/>
    </ligand>
</feature>
<feature type="binding site" evidence="1">
    <location>
        <position position="101"/>
    </location>
    <ligand>
        <name>pyridoxal 5'-phosphate</name>
        <dbReference type="ChEBI" id="CHEBI:597326"/>
    </ligand>
</feature>
<feature type="binding site" evidence="1">
    <location>
        <position position="152"/>
    </location>
    <ligand>
        <name>pyridoxal 5'-phosphate</name>
        <dbReference type="ChEBI" id="CHEBI:597326"/>
    </ligand>
</feature>
<feature type="binding site" evidence="1">
    <location>
        <position position="172"/>
    </location>
    <ligand>
        <name>pyridoxal 5'-phosphate</name>
        <dbReference type="ChEBI" id="CHEBI:597326"/>
    </ligand>
</feature>
<feature type="binding site" evidence="1">
    <location>
        <position position="195"/>
    </location>
    <ligand>
        <name>pyridoxal 5'-phosphate</name>
        <dbReference type="ChEBI" id="CHEBI:597326"/>
    </ligand>
</feature>
<feature type="binding site" evidence="1">
    <location>
        <begin position="237"/>
        <end position="238"/>
    </location>
    <ligand>
        <name>pyridoxal 5'-phosphate</name>
        <dbReference type="ChEBI" id="CHEBI:597326"/>
    </ligand>
</feature>
<feature type="modified residue" description="N6-(pyridoxal phosphate)lysine" evidence="1">
    <location>
        <position position="196"/>
    </location>
</feature>
<organism>
    <name type="scientific">Burkholderia multivorans (strain ATCC 17616 / 249)</name>
    <dbReference type="NCBI Taxonomy" id="395019"/>
    <lineage>
        <taxon>Bacteria</taxon>
        <taxon>Pseudomonadati</taxon>
        <taxon>Pseudomonadota</taxon>
        <taxon>Betaproteobacteria</taxon>
        <taxon>Burkholderiales</taxon>
        <taxon>Burkholderiaceae</taxon>
        <taxon>Burkholderia</taxon>
        <taxon>Burkholderia cepacia complex</taxon>
    </lineage>
</organism>
<sequence length="360" mass="39353">MRVFNFSAGPAALPEEVLRQAADEMLDWHGSGMSVMEMSHRGKEFMSIHEAALADLRELLDVPASHRVLFLQGGGIAENAIVPMNLLGSRKTADFVVTGSWSQKSFNEAKKYCTPHLAATGKTDAGFTRAPAFAEWQLSDDPAYVHLCTNETIDGVETFEIPDLGDVPLVADVSSHILSRPMDVAKYGVLFGGAQKNIGMAGVTVVIVREDLLDRALSICPSAFEWKTVAANNSLYNTPPTYAIYIAGLVFQWLKRQGGLGAIEARNIEKAKLLYDTIDGSSFYLNKVEPAVRSRMNVPFFLADESRNEDFLAGAKARGLLQLKGHKSVGGMRASIYNAVPLEGVKALVEYMKDFEQRCA</sequence>
<dbReference type="EC" id="2.6.1.52" evidence="1"/>
<dbReference type="EMBL" id="CP000868">
    <property type="protein sequence ID" value="ABX15947.1"/>
    <property type="molecule type" value="Genomic_DNA"/>
</dbReference>
<dbReference type="EMBL" id="AP009385">
    <property type="protein sequence ID" value="BAG42923.1"/>
    <property type="molecule type" value="Genomic_DNA"/>
</dbReference>
<dbReference type="RefSeq" id="WP_012213843.1">
    <property type="nucleotide sequence ID" value="NC_010084.1"/>
</dbReference>
<dbReference type="SMR" id="A9ADV9"/>
<dbReference type="STRING" id="395019.BMULJ_00977"/>
<dbReference type="KEGG" id="bmj:BMULJ_00977"/>
<dbReference type="KEGG" id="bmu:Bmul_2262"/>
<dbReference type="eggNOG" id="COG1932">
    <property type="taxonomic scope" value="Bacteria"/>
</dbReference>
<dbReference type="HOGENOM" id="CLU_034866_0_2_4"/>
<dbReference type="UniPathway" id="UPA00135">
    <property type="reaction ID" value="UER00197"/>
</dbReference>
<dbReference type="UniPathway" id="UPA00244">
    <property type="reaction ID" value="UER00311"/>
</dbReference>
<dbReference type="Proteomes" id="UP000008815">
    <property type="component" value="Chromosome 1"/>
</dbReference>
<dbReference type="GO" id="GO:0005737">
    <property type="term" value="C:cytoplasm"/>
    <property type="evidence" value="ECO:0007669"/>
    <property type="project" value="UniProtKB-SubCell"/>
</dbReference>
<dbReference type="GO" id="GO:0004648">
    <property type="term" value="F:O-phospho-L-serine:2-oxoglutarate aminotransferase activity"/>
    <property type="evidence" value="ECO:0007669"/>
    <property type="project" value="UniProtKB-UniRule"/>
</dbReference>
<dbReference type="GO" id="GO:0030170">
    <property type="term" value="F:pyridoxal phosphate binding"/>
    <property type="evidence" value="ECO:0007669"/>
    <property type="project" value="UniProtKB-UniRule"/>
</dbReference>
<dbReference type="GO" id="GO:0006564">
    <property type="term" value="P:L-serine biosynthetic process"/>
    <property type="evidence" value="ECO:0007669"/>
    <property type="project" value="UniProtKB-UniRule"/>
</dbReference>
<dbReference type="GO" id="GO:0008615">
    <property type="term" value="P:pyridoxine biosynthetic process"/>
    <property type="evidence" value="ECO:0007669"/>
    <property type="project" value="UniProtKB-UniRule"/>
</dbReference>
<dbReference type="CDD" id="cd00611">
    <property type="entry name" value="PSAT_like"/>
    <property type="match status" value="1"/>
</dbReference>
<dbReference type="FunFam" id="3.40.640.10:FF:000010">
    <property type="entry name" value="Phosphoserine aminotransferase"/>
    <property type="match status" value="1"/>
</dbReference>
<dbReference type="FunFam" id="3.90.1150.10:FF:000006">
    <property type="entry name" value="Phosphoserine aminotransferase"/>
    <property type="match status" value="1"/>
</dbReference>
<dbReference type="Gene3D" id="3.90.1150.10">
    <property type="entry name" value="Aspartate Aminotransferase, domain 1"/>
    <property type="match status" value="1"/>
</dbReference>
<dbReference type="Gene3D" id="3.40.640.10">
    <property type="entry name" value="Type I PLP-dependent aspartate aminotransferase-like (Major domain)"/>
    <property type="match status" value="1"/>
</dbReference>
<dbReference type="HAMAP" id="MF_00160">
    <property type="entry name" value="SerC_aminotrans_5"/>
    <property type="match status" value="1"/>
</dbReference>
<dbReference type="InterPro" id="IPR000192">
    <property type="entry name" value="Aminotrans_V_dom"/>
</dbReference>
<dbReference type="InterPro" id="IPR020578">
    <property type="entry name" value="Aminotrans_V_PyrdxlP_BS"/>
</dbReference>
<dbReference type="InterPro" id="IPR022278">
    <property type="entry name" value="Pser_aminoTfrase"/>
</dbReference>
<dbReference type="InterPro" id="IPR015424">
    <property type="entry name" value="PyrdxlP-dep_Trfase"/>
</dbReference>
<dbReference type="InterPro" id="IPR015421">
    <property type="entry name" value="PyrdxlP-dep_Trfase_major"/>
</dbReference>
<dbReference type="InterPro" id="IPR015422">
    <property type="entry name" value="PyrdxlP-dep_Trfase_small"/>
</dbReference>
<dbReference type="NCBIfam" id="NF003764">
    <property type="entry name" value="PRK05355.1"/>
    <property type="match status" value="1"/>
</dbReference>
<dbReference type="NCBIfam" id="TIGR01364">
    <property type="entry name" value="serC_1"/>
    <property type="match status" value="1"/>
</dbReference>
<dbReference type="PANTHER" id="PTHR43247">
    <property type="entry name" value="PHOSPHOSERINE AMINOTRANSFERASE"/>
    <property type="match status" value="1"/>
</dbReference>
<dbReference type="PANTHER" id="PTHR43247:SF1">
    <property type="entry name" value="PHOSPHOSERINE AMINOTRANSFERASE"/>
    <property type="match status" value="1"/>
</dbReference>
<dbReference type="Pfam" id="PF00266">
    <property type="entry name" value="Aminotran_5"/>
    <property type="match status" value="1"/>
</dbReference>
<dbReference type="PIRSF" id="PIRSF000525">
    <property type="entry name" value="SerC"/>
    <property type="match status" value="1"/>
</dbReference>
<dbReference type="SUPFAM" id="SSF53383">
    <property type="entry name" value="PLP-dependent transferases"/>
    <property type="match status" value="1"/>
</dbReference>
<dbReference type="PROSITE" id="PS00595">
    <property type="entry name" value="AA_TRANSFER_CLASS_5"/>
    <property type="match status" value="1"/>
</dbReference>
<keyword id="KW-0028">Amino-acid biosynthesis</keyword>
<keyword id="KW-0032">Aminotransferase</keyword>
<keyword id="KW-0963">Cytoplasm</keyword>
<keyword id="KW-0663">Pyridoxal phosphate</keyword>
<keyword id="KW-0664">Pyridoxine biosynthesis</keyword>
<keyword id="KW-1185">Reference proteome</keyword>
<keyword id="KW-0718">Serine biosynthesis</keyword>
<keyword id="KW-0808">Transferase</keyword>
<reference key="1">
    <citation type="submission" date="2007-10" db="EMBL/GenBank/DDBJ databases">
        <title>Complete sequence of chromosome 1 of Burkholderia multivorans ATCC 17616.</title>
        <authorList>
            <person name="Copeland A."/>
            <person name="Lucas S."/>
            <person name="Lapidus A."/>
            <person name="Barry K."/>
            <person name="Glavina del Rio T."/>
            <person name="Dalin E."/>
            <person name="Tice H."/>
            <person name="Pitluck S."/>
            <person name="Chain P."/>
            <person name="Malfatti S."/>
            <person name="Shin M."/>
            <person name="Vergez L."/>
            <person name="Schmutz J."/>
            <person name="Larimer F."/>
            <person name="Land M."/>
            <person name="Hauser L."/>
            <person name="Kyrpides N."/>
            <person name="Kim E."/>
            <person name="Tiedje J."/>
            <person name="Richardson P."/>
        </authorList>
    </citation>
    <scope>NUCLEOTIDE SEQUENCE [LARGE SCALE GENOMIC DNA]</scope>
    <source>
        <strain>ATCC 17616 / 249</strain>
    </source>
</reference>
<reference key="2">
    <citation type="submission" date="2007-04" db="EMBL/GenBank/DDBJ databases">
        <title>Complete genome sequence of Burkholderia multivorans ATCC 17616.</title>
        <authorList>
            <person name="Ohtsubo Y."/>
            <person name="Yamashita A."/>
            <person name="Kurokawa K."/>
            <person name="Takami H."/>
            <person name="Yuhara S."/>
            <person name="Nishiyama E."/>
            <person name="Endo R."/>
            <person name="Miyazaki R."/>
            <person name="Ono A."/>
            <person name="Yano K."/>
            <person name="Ito M."/>
            <person name="Sota M."/>
            <person name="Yuji N."/>
            <person name="Hattori M."/>
            <person name="Tsuda M."/>
        </authorList>
    </citation>
    <scope>NUCLEOTIDE SEQUENCE [LARGE SCALE GENOMIC DNA]</scope>
    <source>
        <strain>ATCC 17616 / 249</strain>
    </source>
</reference>
<protein>
    <recommendedName>
        <fullName evidence="1">Phosphoserine aminotransferase</fullName>
        <ecNumber evidence="1">2.6.1.52</ecNumber>
    </recommendedName>
    <alternativeName>
        <fullName evidence="1">Phosphohydroxythreonine aminotransferase</fullName>
        <shortName evidence="1">PSAT</shortName>
    </alternativeName>
</protein>
<name>SERC_BURM1</name>
<comment type="function">
    <text evidence="1">Catalyzes the reversible conversion of 3-phosphohydroxypyruvate to phosphoserine and of 3-hydroxy-2-oxo-4-phosphonooxybutanoate to phosphohydroxythreonine.</text>
</comment>
<comment type="catalytic activity">
    <reaction evidence="1">
        <text>O-phospho-L-serine + 2-oxoglutarate = 3-phosphooxypyruvate + L-glutamate</text>
        <dbReference type="Rhea" id="RHEA:14329"/>
        <dbReference type="ChEBI" id="CHEBI:16810"/>
        <dbReference type="ChEBI" id="CHEBI:18110"/>
        <dbReference type="ChEBI" id="CHEBI:29985"/>
        <dbReference type="ChEBI" id="CHEBI:57524"/>
        <dbReference type="EC" id="2.6.1.52"/>
    </reaction>
</comment>
<comment type="catalytic activity">
    <reaction evidence="1">
        <text>4-(phosphooxy)-L-threonine + 2-oxoglutarate = (R)-3-hydroxy-2-oxo-4-phosphooxybutanoate + L-glutamate</text>
        <dbReference type="Rhea" id="RHEA:16573"/>
        <dbReference type="ChEBI" id="CHEBI:16810"/>
        <dbReference type="ChEBI" id="CHEBI:29985"/>
        <dbReference type="ChEBI" id="CHEBI:58452"/>
        <dbReference type="ChEBI" id="CHEBI:58538"/>
        <dbReference type="EC" id="2.6.1.52"/>
    </reaction>
</comment>
<comment type="cofactor">
    <cofactor evidence="1">
        <name>pyridoxal 5'-phosphate</name>
        <dbReference type="ChEBI" id="CHEBI:597326"/>
    </cofactor>
    <text evidence="1">Binds 1 pyridoxal phosphate per subunit.</text>
</comment>
<comment type="pathway">
    <text evidence="1">Amino-acid biosynthesis; L-serine biosynthesis; L-serine from 3-phospho-D-glycerate: step 2/3.</text>
</comment>
<comment type="pathway">
    <text evidence="1">Cofactor biosynthesis; pyridoxine 5'-phosphate biosynthesis; pyridoxine 5'-phosphate from D-erythrose 4-phosphate: step 3/5.</text>
</comment>
<comment type="subunit">
    <text evidence="1">Homodimer.</text>
</comment>
<comment type="subcellular location">
    <subcellularLocation>
        <location evidence="1">Cytoplasm</location>
    </subcellularLocation>
</comment>
<comment type="similarity">
    <text evidence="1">Belongs to the class-V pyridoxal-phosphate-dependent aminotransferase family. SerC subfamily.</text>
</comment>
<accession>A9ADV9</accession>
<gene>
    <name evidence="1" type="primary">serC</name>
    <name type="ordered locus">Bmul_2262</name>
    <name type="ordered locus">BMULJ_00977</name>
</gene>